<name>CITG2_SALCH</name>
<sequence>MMPIPANPTNASIQPQSLYDAWADLAWRAMLTEVNLSPKPGLVDRLNCGAHKDMALADFHRSAEAIRHWLPRFMEYGASCTRLPPESVLAGLRPLGMACEAAMFRATAGVNTHKGSIFSLGLLCAAIGRLYQLRQPITAETLCATAADFCRGLTTRELRQNNLQLTAGQRLYQQLGLTGARGEAEAGYPLVIRHALPHYRALLAQGRDPELALLDTLLLLMSLNGDTNVASRGGADGLRWLQQQAAVLLHQGGIRTPDDLVYLHRFDQQCIERNLSPGGSADLLIVTWFLAQISQVNH</sequence>
<dbReference type="EC" id="2.4.2.52" evidence="1"/>
<dbReference type="EMBL" id="AE017220">
    <property type="protein sequence ID" value="AAX64554.1"/>
    <property type="molecule type" value="Genomic_DNA"/>
</dbReference>
<dbReference type="KEGG" id="sec:SCH_0648"/>
<dbReference type="HOGENOM" id="CLU_056179_1_0_6"/>
<dbReference type="Proteomes" id="UP000000538">
    <property type="component" value="Chromosome"/>
</dbReference>
<dbReference type="GO" id="GO:0005524">
    <property type="term" value="F:ATP binding"/>
    <property type="evidence" value="ECO:0007669"/>
    <property type="project" value="UniProtKB-KW"/>
</dbReference>
<dbReference type="GO" id="GO:0046917">
    <property type="term" value="F:triphosphoribosyl-dephospho-CoA synthase activity"/>
    <property type="evidence" value="ECO:0007669"/>
    <property type="project" value="UniProtKB-UniRule"/>
</dbReference>
<dbReference type="GO" id="GO:0051191">
    <property type="term" value="P:prosthetic group biosynthetic process"/>
    <property type="evidence" value="ECO:0007669"/>
    <property type="project" value="TreeGrafter"/>
</dbReference>
<dbReference type="FunFam" id="1.10.4200.10:FF:000001">
    <property type="entry name" value="Triphosphoribosyl-dephospho-CoA synthase CitG"/>
    <property type="match status" value="1"/>
</dbReference>
<dbReference type="Gene3D" id="1.10.4200.10">
    <property type="entry name" value="Triphosphoribosyl-dephospho-CoA protein"/>
    <property type="match status" value="1"/>
</dbReference>
<dbReference type="HAMAP" id="MF_00397">
    <property type="entry name" value="CitG"/>
    <property type="match status" value="1"/>
</dbReference>
<dbReference type="InterPro" id="IPR002736">
    <property type="entry name" value="CitG"/>
</dbReference>
<dbReference type="InterPro" id="IPR017551">
    <property type="entry name" value="TriPribosyl-deP-CoA_syn_CitG"/>
</dbReference>
<dbReference type="NCBIfam" id="TIGR03125">
    <property type="entry name" value="citrate_citG"/>
    <property type="match status" value="1"/>
</dbReference>
<dbReference type="NCBIfam" id="NF007503">
    <property type="entry name" value="PRK10096.1"/>
    <property type="match status" value="1"/>
</dbReference>
<dbReference type="PANTHER" id="PTHR30201:SF2">
    <property type="entry name" value="2-(5''-TRIPHOSPHORIBOSYL)-3'-DEPHOSPHOCOENZYME-A SYNTHASE"/>
    <property type="match status" value="1"/>
</dbReference>
<dbReference type="PANTHER" id="PTHR30201">
    <property type="entry name" value="TRIPHOSPHORIBOSYL-DEPHOSPHO-COA SYNTHASE"/>
    <property type="match status" value="1"/>
</dbReference>
<dbReference type="Pfam" id="PF01874">
    <property type="entry name" value="CitG"/>
    <property type="match status" value="1"/>
</dbReference>
<gene>
    <name evidence="1" type="primary">citG2</name>
    <name type="ordered locus">SCH_0648</name>
</gene>
<accession>Q57RV7</accession>
<feature type="chain" id="PRO_0000255408" description="Probable 2-(5''-triphosphoribosyl)-3'-dephosphocoenzyme-A synthase 2">
    <location>
        <begin position="1"/>
        <end position="298"/>
    </location>
</feature>
<reference key="1">
    <citation type="journal article" date="2005" name="Nucleic Acids Res.">
        <title>The genome sequence of Salmonella enterica serovar Choleraesuis, a highly invasive and resistant zoonotic pathogen.</title>
        <authorList>
            <person name="Chiu C.-H."/>
            <person name="Tang P."/>
            <person name="Chu C."/>
            <person name="Hu S."/>
            <person name="Bao Q."/>
            <person name="Yu J."/>
            <person name="Chou Y.-Y."/>
            <person name="Wang H.-S."/>
            <person name="Lee Y.-S."/>
        </authorList>
    </citation>
    <scope>NUCLEOTIDE SEQUENCE [LARGE SCALE GENOMIC DNA]</scope>
    <source>
        <strain>SC-B67</strain>
    </source>
</reference>
<keyword id="KW-0067">ATP-binding</keyword>
<keyword id="KW-0547">Nucleotide-binding</keyword>
<keyword id="KW-0808">Transferase</keyword>
<organism>
    <name type="scientific">Salmonella choleraesuis (strain SC-B67)</name>
    <dbReference type="NCBI Taxonomy" id="321314"/>
    <lineage>
        <taxon>Bacteria</taxon>
        <taxon>Pseudomonadati</taxon>
        <taxon>Pseudomonadota</taxon>
        <taxon>Gammaproteobacteria</taxon>
        <taxon>Enterobacterales</taxon>
        <taxon>Enterobacteriaceae</taxon>
        <taxon>Salmonella</taxon>
    </lineage>
</organism>
<protein>
    <recommendedName>
        <fullName evidence="1">Probable 2-(5''-triphosphoribosyl)-3'-dephosphocoenzyme-A synthase 2</fullName>
        <shortName evidence="1">2-(5''-triphosphoribosyl)-3'-dephospho-CoA synthase 2</shortName>
        <ecNumber evidence="1">2.4.2.52</ecNumber>
    </recommendedName>
</protein>
<proteinExistence type="inferred from homology"/>
<comment type="catalytic activity">
    <reaction evidence="1">
        <text>3'-dephospho-CoA + ATP = 2'-(5''-triphospho-alpha-D-ribosyl)-3'-dephospho-CoA + adenine</text>
        <dbReference type="Rhea" id="RHEA:15117"/>
        <dbReference type="ChEBI" id="CHEBI:16708"/>
        <dbReference type="ChEBI" id="CHEBI:30616"/>
        <dbReference type="ChEBI" id="CHEBI:57328"/>
        <dbReference type="ChEBI" id="CHEBI:61378"/>
        <dbReference type="EC" id="2.4.2.52"/>
    </reaction>
</comment>
<comment type="similarity">
    <text evidence="1">Belongs to the CitG/MdcB family.</text>
</comment>
<evidence type="ECO:0000255" key="1">
    <source>
        <dbReference type="HAMAP-Rule" id="MF_00397"/>
    </source>
</evidence>